<sequence>MVSIRADEISNTLRERIEQYNREVKIVNTGTVLQVGDGIARIHGLDEVMAGELVEFEEGTIGIALNLESTNVGVVLMGDGLMIEEGSSVKATGRIAQIPVSEAYLGRVLNALAKPIDGRGEISASESRLIESPAPGIISRRSVYEPLQTGLVAIDSMIPIGRGQRELIIGDRQTGKTAVATDTILNQQGQNVICVYVAIGQKASSVAQVVTTLQEGGAMEYTIVVAEMADSPATLQYLAPYTGAALAEYFMYRKQHTLIIYDDLSKQAQAYRQMSLLLRRPPGREAYPGDVFYLHSRLLERAAKSNSSLGEGSMTALPIVETQSGDVSAYIPTNVISITDGQIFLSADLFNAGIRPAINVGISVSRVGSAAQTKAMKQVAGKLKLELAQFTELEAFAQFASDLDKATQSQLARGRRLRELLKQSQSAPLTVGEQIMTVYTGTKGYLDSLEIGQVSKFLDALRTHLKTNKPQFQEIISSTKTFTEEAEVLLKEAIQEQMERFLLQ</sequence>
<organism>
    <name type="scientific">Jasminum nudiflorum</name>
    <name type="common">Winter jasmine</name>
    <dbReference type="NCBI Taxonomy" id="126431"/>
    <lineage>
        <taxon>Eukaryota</taxon>
        <taxon>Viridiplantae</taxon>
        <taxon>Streptophyta</taxon>
        <taxon>Embryophyta</taxon>
        <taxon>Tracheophyta</taxon>
        <taxon>Spermatophyta</taxon>
        <taxon>Magnoliopsida</taxon>
        <taxon>eudicotyledons</taxon>
        <taxon>Gunneridae</taxon>
        <taxon>Pentapetalae</taxon>
        <taxon>asterids</taxon>
        <taxon>lamiids</taxon>
        <taxon>Lamiales</taxon>
        <taxon>Oleaceae</taxon>
        <taxon>Jasmineae</taxon>
        <taxon>Jasminum</taxon>
    </lineage>
</organism>
<reference key="1">
    <citation type="journal article" date="2007" name="Mol. Biol. Evol.">
        <title>Gene relocations within chloroplast genomes of Jasminum and Menodora (Oleaceae) are due to multiple, overlapping inversions.</title>
        <authorList>
            <person name="Lee H.-L."/>
            <person name="Jansen R.K."/>
            <person name="Chumley T.W."/>
            <person name="Kim K.-J."/>
        </authorList>
    </citation>
    <scope>NUCLEOTIDE SEQUENCE [LARGE SCALE GENOMIC DNA]</scope>
</reference>
<gene>
    <name evidence="1" type="primary">atpA</name>
    <name type="ORF">JNC0116</name>
</gene>
<geneLocation type="chloroplast"/>
<dbReference type="EC" id="7.1.2.2" evidence="1"/>
<dbReference type="EMBL" id="DQ673255">
    <property type="protein sequence ID" value="ABG74613.1"/>
    <property type="molecule type" value="Genomic_DNA"/>
</dbReference>
<dbReference type="RefSeq" id="YP_778475.1">
    <property type="nucleotide sequence ID" value="NC_008407.1"/>
</dbReference>
<dbReference type="SMR" id="Q06RE6"/>
<dbReference type="GeneID" id="4319784"/>
<dbReference type="GO" id="GO:0009535">
    <property type="term" value="C:chloroplast thylakoid membrane"/>
    <property type="evidence" value="ECO:0007669"/>
    <property type="project" value="UniProtKB-SubCell"/>
</dbReference>
<dbReference type="GO" id="GO:0045259">
    <property type="term" value="C:proton-transporting ATP synthase complex"/>
    <property type="evidence" value="ECO:0007669"/>
    <property type="project" value="UniProtKB-KW"/>
</dbReference>
<dbReference type="GO" id="GO:0043531">
    <property type="term" value="F:ADP binding"/>
    <property type="evidence" value="ECO:0007669"/>
    <property type="project" value="TreeGrafter"/>
</dbReference>
<dbReference type="GO" id="GO:0005524">
    <property type="term" value="F:ATP binding"/>
    <property type="evidence" value="ECO:0007669"/>
    <property type="project" value="UniProtKB-UniRule"/>
</dbReference>
<dbReference type="GO" id="GO:0046933">
    <property type="term" value="F:proton-transporting ATP synthase activity, rotational mechanism"/>
    <property type="evidence" value="ECO:0007669"/>
    <property type="project" value="UniProtKB-UniRule"/>
</dbReference>
<dbReference type="CDD" id="cd18113">
    <property type="entry name" value="ATP-synt_F1_alpha_C"/>
    <property type="match status" value="1"/>
</dbReference>
<dbReference type="CDD" id="cd18116">
    <property type="entry name" value="ATP-synt_F1_alpha_N"/>
    <property type="match status" value="1"/>
</dbReference>
<dbReference type="CDD" id="cd01132">
    <property type="entry name" value="F1-ATPase_alpha_CD"/>
    <property type="match status" value="1"/>
</dbReference>
<dbReference type="FunFam" id="1.20.150.20:FF:000001">
    <property type="entry name" value="ATP synthase subunit alpha"/>
    <property type="match status" value="1"/>
</dbReference>
<dbReference type="FunFam" id="2.40.30.20:FF:000001">
    <property type="entry name" value="ATP synthase subunit alpha"/>
    <property type="match status" value="1"/>
</dbReference>
<dbReference type="FunFam" id="3.40.50.300:FF:000002">
    <property type="entry name" value="ATP synthase subunit alpha"/>
    <property type="match status" value="1"/>
</dbReference>
<dbReference type="Gene3D" id="2.40.30.20">
    <property type="match status" value="1"/>
</dbReference>
<dbReference type="Gene3D" id="1.20.150.20">
    <property type="entry name" value="ATP synthase alpha/beta chain, C-terminal domain"/>
    <property type="match status" value="1"/>
</dbReference>
<dbReference type="Gene3D" id="3.40.50.300">
    <property type="entry name" value="P-loop containing nucleotide triphosphate hydrolases"/>
    <property type="match status" value="1"/>
</dbReference>
<dbReference type="HAMAP" id="MF_01346">
    <property type="entry name" value="ATP_synth_alpha_bact"/>
    <property type="match status" value="1"/>
</dbReference>
<dbReference type="InterPro" id="IPR023366">
    <property type="entry name" value="ATP_synth_asu-like_sf"/>
</dbReference>
<dbReference type="InterPro" id="IPR000793">
    <property type="entry name" value="ATP_synth_asu_C"/>
</dbReference>
<dbReference type="InterPro" id="IPR038376">
    <property type="entry name" value="ATP_synth_asu_C_sf"/>
</dbReference>
<dbReference type="InterPro" id="IPR033732">
    <property type="entry name" value="ATP_synth_F1_a_nt-bd_dom"/>
</dbReference>
<dbReference type="InterPro" id="IPR005294">
    <property type="entry name" value="ATP_synth_F1_asu"/>
</dbReference>
<dbReference type="InterPro" id="IPR020003">
    <property type="entry name" value="ATPase_a/bsu_AS"/>
</dbReference>
<dbReference type="InterPro" id="IPR004100">
    <property type="entry name" value="ATPase_F1/V1/A1_a/bsu_N"/>
</dbReference>
<dbReference type="InterPro" id="IPR036121">
    <property type="entry name" value="ATPase_F1/V1/A1_a/bsu_N_sf"/>
</dbReference>
<dbReference type="InterPro" id="IPR000194">
    <property type="entry name" value="ATPase_F1/V1/A1_a/bsu_nucl-bd"/>
</dbReference>
<dbReference type="InterPro" id="IPR027417">
    <property type="entry name" value="P-loop_NTPase"/>
</dbReference>
<dbReference type="NCBIfam" id="TIGR00962">
    <property type="entry name" value="atpA"/>
    <property type="match status" value="1"/>
</dbReference>
<dbReference type="NCBIfam" id="NF009884">
    <property type="entry name" value="PRK13343.1"/>
    <property type="match status" value="1"/>
</dbReference>
<dbReference type="PANTHER" id="PTHR48082">
    <property type="entry name" value="ATP SYNTHASE SUBUNIT ALPHA, MITOCHONDRIAL"/>
    <property type="match status" value="1"/>
</dbReference>
<dbReference type="PANTHER" id="PTHR48082:SF2">
    <property type="entry name" value="ATP SYNTHASE SUBUNIT ALPHA, MITOCHONDRIAL"/>
    <property type="match status" value="1"/>
</dbReference>
<dbReference type="Pfam" id="PF00006">
    <property type="entry name" value="ATP-synt_ab"/>
    <property type="match status" value="1"/>
</dbReference>
<dbReference type="Pfam" id="PF00306">
    <property type="entry name" value="ATP-synt_ab_C"/>
    <property type="match status" value="1"/>
</dbReference>
<dbReference type="Pfam" id="PF02874">
    <property type="entry name" value="ATP-synt_ab_N"/>
    <property type="match status" value="1"/>
</dbReference>
<dbReference type="PIRSF" id="PIRSF039088">
    <property type="entry name" value="F_ATPase_subunit_alpha"/>
    <property type="match status" value="1"/>
</dbReference>
<dbReference type="SUPFAM" id="SSF47917">
    <property type="entry name" value="C-terminal domain of alpha and beta subunits of F1 ATP synthase"/>
    <property type="match status" value="1"/>
</dbReference>
<dbReference type="SUPFAM" id="SSF50615">
    <property type="entry name" value="N-terminal domain of alpha and beta subunits of F1 ATP synthase"/>
    <property type="match status" value="1"/>
</dbReference>
<dbReference type="SUPFAM" id="SSF52540">
    <property type="entry name" value="P-loop containing nucleoside triphosphate hydrolases"/>
    <property type="match status" value="1"/>
</dbReference>
<dbReference type="PROSITE" id="PS00152">
    <property type="entry name" value="ATPASE_ALPHA_BETA"/>
    <property type="match status" value="1"/>
</dbReference>
<proteinExistence type="inferred from homology"/>
<keyword id="KW-0066">ATP synthesis</keyword>
<keyword id="KW-0067">ATP-binding</keyword>
<keyword id="KW-0139">CF(1)</keyword>
<keyword id="KW-0150">Chloroplast</keyword>
<keyword id="KW-0375">Hydrogen ion transport</keyword>
<keyword id="KW-0406">Ion transport</keyword>
<keyword id="KW-0472">Membrane</keyword>
<keyword id="KW-0547">Nucleotide-binding</keyword>
<keyword id="KW-0934">Plastid</keyword>
<keyword id="KW-0793">Thylakoid</keyword>
<keyword id="KW-1278">Translocase</keyword>
<keyword id="KW-0813">Transport</keyword>
<protein>
    <recommendedName>
        <fullName evidence="1">ATP synthase subunit alpha, chloroplastic</fullName>
        <ecNumber evidence="1">7.1.2.2</ecNumber>
    </recommendedName>
    <alternativeName>
        <fullName evidence="1">ATP synthase F1 sector subunit alpha</fullName>
    </alternativeName>
    <alternativeName>
        <fullName evidence="1">F-ATPase subunit alpha</fullName>
    </alternativeName>
</protein>
<comment type="function">
    <text evidence="1">Produces ATP from ADP in the presence of a proton gradient across the membrane. The alpha chain is a regulatory subunit.</text>
</comment>
<comment type="catalytic activity">
    <reaction evidence="1">
        <text>ATP + H2O + 4 H(+)(in) = ADP + phosphate + 5 H(+)(out)</text>
        <dbReference type="Rhea" id="RHEA:57720"/>
        <dbReference type="ChEBI" id="CHEBI:15377"/>
        <dbReference type="ChEBI" id="CHEBI:15378"/>
        <dbReference type="ChEBI" id="CHEBI:30616"/>
        <dbReference type="ChEBI" id="CHEBI:43474"/>
        <dbReference type="ChEBI" id="CHEBI:456216"/>
        <dbReference type="EC" id="7.1.2.2"/>
    </reaction>
</comment>
<comment type="subunit">
    <text evidence="1">F-type ATPases have 2 components, CF(1) - the catalytic core - and CF(0) - the membrane proton channel. CF(1) has five subunits: alpha(3), beta(3), gamma(1), delta(1), epsilon(1). CF(0) has four main subunits: a, b, b' and c.</text>
</comment>
<comment type="subcellular location">
    <subcellularLocation>
        <location evidence="1">Plastid</location>
        <location evidence="1">Chloroplast thylakoid membrane</location>
        <topology evidence="1">Peripheral membrane protein</topology>
    </subcellularLocation>
</comment>
<comment type="similarity">
    <text evidence="1">Belongs to the ATPase alpha/beta chains family.</text>
</comment>
<accession>Q06RE6</accession>
<evidence type="ECO:0000255" key="1">
    <source>
        <dbReference type="HAMAP-Rule" id="MF_01346"/>
    </source>
</evidence>
<feature type="chain" id="PRO_0000275168" description="ATP synthase subunit alpha, chloroplastic">
    <location>
        <begin position="1"/>
        <end position="504"/>
    </location>
</feature>
<feature type="binding site" evidence="1">
    <location>
        <begin position="170"/>
        <end position="177"/>
    </location>
    <ligand>
        <name>ATP</name>
        <dbReference type="ChEBI" id="CHEBI:30616"/>
    </ligand>
</feature>
<feature type="site" description="Required for activity" evidence="1">
    <location>
        <position position="363"/>
    </location>
</feature>
<name>ATPA_JASNU</name>